<proteinExistence type="evidence at transcript level"/>
<accession>Q5RBZ3</accession>
<organism>
    <name type="scientific">Pongo abelii</name>
    <name type="common">Sumatran orangutan</name>
    <name type="synonym">Pongo pygmaeus abelii</name>
    <dbReference type="NCBI Taxonomy" id="9601"/>
    <lineage>
        <taxon>Eukaryota</taxon>
        <taxon>Metazoa</taxon>
        <taxon>Chordata</taxon>
        <taxon>Craniata</taxon>
        <taxon>Vertebrata</taxon>
        <taxon>Euteleostomi</taxon>
        <taxon>Mammalia</taxon>
        <taxon>Eutheria</taxon>
        <taxon>Euarchontoglires</taxon>
        <taxon>Primates</taxon>
        <taxon>Haplorrhini</taxon>
        <taxon>Catarrhini</taxon>
        <taxon>Hominidae</taxon>
        <taxon>Pongo</taxon>
    </lineage>
</organism>
<feature type="chain" id="PRO_0000254037" description="WD repeat-containing protein 89">
    <location>
        <begin position="1"/>
        <end position="387"/>
    </location>
</feature>
<feature type="repeat" description="WD 1">
    <location>
        <begin position="21"/>
        <end position="65"/>
    </location>
</feature>
<feature type="repeat" description="WD 2">
    <location>
        <begin position="68"/>
        <end position="107"/>
    </location>
</feature>
<feature type="repeat" description="WD 3">
    <location>
        <begin position="112"/>
        <end position="156"/>
    </location>
</feature>
<feature type="repeat" description="WD 4">
    <location>
        <begin position="168"/>
        <end position="208"/>
    </location>
</feature>
<feature type="repeat" description="WD 5">
    <location>
        <begin position="214"/>
        <end position="254"/>
    </location>
</feature>
<feature type="repeat" description="WD 6">
    <location>
        <begin position="319"/>
        <end position="358"/>
    </location>
</feature>
<protein>
    <recommendedName>
        <fullName>WD repeat-containing protein 89</fullName>
    </recommendedName>
</protein>
<keyword id="KW-1185">Reference proteome</keyword>
<keyword id="KW-0677">Repeat</keyword>
<keyword id="KW-0853">WD repeat</keyword>
<sequence length="387" mass="43167">MEKIEEQFANLHIVKCSLGTKEPTYLLGIDTSKTVQAGKENLVAVLCSNGSIRIYDKERLSVLREFSGYPGLLNGVRFANSCDSVYSACTDGTVKCWDARVAREKPVQLFKGYPSNIFISFDINCNDHIICAGTEKVDDDALLVFWDARMNSQDLSTTKDPLGAYSETHSDDVTQVRFHPSNPNMVVSGSSDGLVNVFDINIDNEEDALVTTCNSISSVSCIGWSGKGYKQIYCMTHDEGFYWWDLNHLDTDEPVTRLNIQDVREVVNMKEDALDYLIGGLYHEKTDTLHVIGGTNKGRIHLMNCSVSGLTHVTSLQGGHAATVRSFCWNVQDDSLLTGGEDAQLLLWKPGAIEKTFTKKESMKIASSVHQRVRVHSNDSYKRRKKQ</sequence>
<reference key="1">
    <citation type="submission" date="2004-11" db="EMBL/GenBank/DDBJ databases">
        <authorList>
            <consortium name="The German cDNA consortium"/>
        </authorList>
    </citation>
    <scope>NUCLEOTIDE SEQUENCE [LARGE SCALE MRNA]</scope>
    <source>
        <tissue>Kidney</tissue>
    </source>
</reference>
<gene>
    <name type="primary">WDR89</name>
</gene>
<dbReference type="EMBL" id="CR858489">
    <property type="protein sequence ID" value="CAH90717.1"/>
    <property type="molecule type" value="mRNA"/>
</dbReference>
<dbReference type="RefSeq" id="NP_001125398.1">
    <property type="nucleotide sequence ID" value="NM_001131926.1"/>
</dbReference>
<dbReference type="SMR" id="Q5RBZ3"/>
<dbReference type="FunCoup" id="Q5RBZ3">
    <property type="interactions" value="1509"/>
</dbReference>
<dbReference type="STRING" id="9601.ENSPPYP00000006698"/>
<dbReference type="Ensembl" id="ENSPPYT00000006961.2">
    <property type="protein sequence ID" value="ENSPPYP00000006698.1"/>
    <property type="gene ID" value="ENSPPYG00000005892.2"/>
</dbReference>
<dbReference type="GeneID" id="100172303"/>
<dbReference type="KEGG" id="pon:100172303"/>
<dbReference type="CTD" id="112840"/>
<dbReference type="eggNOG" id="KOG1188">
    <property type="taxonomic scope" value="Eukaryota"/>
</dbReference>
<dbReference type="GeneTree" id="ENSGT00390000006996"/>
<dbReference type="HOGENOM" id="CLU_037323_4_0_1"/>
<dbReference type="InParanoid" id="Q5RBZ3"/>
<dbReference type="OMA" id="YHEKTDK"/>
<dbReference type="OrthoDB" id="25131at2759"/>
<dbReference type="TreeFam" id="TF324390"/>
<dbReference type="Proteomes" id="UP000001595">
    <property type="component" value="Chromosome 14"/>
</dbReference>
<dbReference type="GO" id="GO:0022038">
    <property type="term" value="P:corpus callosum development"/>
    <property type="evidence" value="ECO:0007669"/>
    <property type="project" value="Ensembl"/>
</dbReference>
<dbReference type="GO" id="GO:0021591">
    <property type="term" value="P:ventricular system development"/>
    <property type="evidence" value="ECO:0007669"/>
    <property type="project" value="Ensembl"/>
</dbReference>
<dbReference type="Gene3D" id="2.130.10.10">
    <property type="entry name" value="YVTN repeat-like/Quinoprotein amine dehydrogenase"/>
    <property type="match status" value="2"/>
</dbReference>
<dbReference type="InterPro" id="IPR015943">
    <property type="entry name" value="WD40/YVTN_repeat-like_dom_sf"/>
</dbReference>
<dbReference type="InterPro" id="IPR036322">
    <property type="entry name" value="WD40_repeat_dom_sf"/>
</dbReference>
<dbReference type="InterPro" id="IPR001680">
    <property type="entry name" value="WD40_rpt"/>
</dbReference>
<dbReference type="InterPro" id="IPR039328">
    <property type="entry name" value="WDR89"/>
</dbReference>
<dbReference type="PANTHER" id="PTHR22889">
    <property type="entry name" value="WD REPEAT-CONTAINING PROTEIN 89"/>
    <property type="match status" value="1"/>
</dbReference>
<dbReference type="PANTHER" id="PTHR22889:SF0">
    <property type="entry name" value="WD REPEAT-CONTAINING PROTEIN 89"/>
    <property type="match status" value="1"/>
</dbReference>
<dbReference type="Pfam" id="PF00400">
    <property type="entry name" value="WD40"/>
    <property type="match status" value="3"/>
</dbReference>
<dbReference type="SMART" id="SM00320">
    <property type="entry name" value="WD40"/>
    <property type="match status" value="5"/>
</dbReference>
<dbReference type="SUPFAM" id="SSF50978">
    <property type="entry name" value="WD40 repeat-like"/>
    <property type="match status" value="1"/>
</dbReference>
<dbReference type="PROSITE" id="PS50082">
    <property type="entry name" value="WD_REPEATS_2"/>
    <property type="match status" value="3"/>
</dbReference>
<dbReference type="PROSITE" id="PS50294">
    <property type="entry name" value="WD_REPEATS_REGION"/>
    <property type="match status" value="3"/>
</dbReference>
<name>WDR89_PONAB</name>